<gene>
    <name type="ORF">ARALYDRAFT_471923</name>
</gene>
<keyword id="KW-1003">Cell membrane</keyword>
<keyword id="KW-0325">Glycoprotein</keyword>
<keyword id="KW-0472">Membrane</keyword>
<keyword id="KW-1185">Reference proteome</keyword>
<keyword id="KW-0812">Transmembrane</keyword>
<keyword id="KW-1133">Transmembrane helix</keyword>
<dbReference type="EMBL" id="GL348713">
    <property type="protein sequence ID" value="EFH66470.1"/>
    <property type="molecule type" value="Genomic_DNA"/>
</dbReference>
<dbReference type="RefSeq" id="XP_002890211.1">
    <property type="nucleotide sequence ID" value="XM_002890165.1"/>
</dbReference>
<dbReference type="STRING" id="81972.D7KFC7"/>
<dbReference type="EnsemblPlants" id="fgenesh2_kg.1__1877__AT1G17200.1">
    <property type="protein sequence ID" value="fgenesh2_kg.1__1877__AT1G17200.1"/>
    <property type="gene ID" value="fgenesh2_kg.1__1877__AT1G17200.1"/>
</dbReference>
<dbReference type="Gramene" id="fgenesh2_kg.1__1877__AT1G17200.1">
    <property type="protein sequence ID" value="fgenesh2_kg.1__1877__AT1G17200.1"/>
    <property type="gene ID" value="fgenesh2_kg.1__1877__AT1G17200.1"/>
</dbReference>
<dbReference type="eggNOG" id="ENOG502S0J7">
    <property type="taxonomic scope" value="Eukaryota"/>
</dbReference>
<dbReference type="HOGENOM" id="CLU_066104_2_2_1"/>
<dbReference type="OrthoDB" id="749363at2759"/>
<dbReference type="Proteomes" id="UP000008694">
    <property type="component" value="Unassembled WGS sequence"/>
</dbReference>
<dbReference type="GO" id="GO:0005886">
    <property type="term" value="C:plasma membrane"/>
    <property type="evidence" value="ECO:0007669"/>
    <property type="project" value="UniProtKB-SubCell"/>
</dbReference>
<dbReference type="InterPro" id="IPR006459">
    <property type="entry name" value="CASP/CASPL"/>
</dbReference>
<dbReference type="InterPro" id="IPR006702">
    <property type="entry name" value="CASP_dom"/>
</dbReference>
<dbReference type="NCBIfam" id="TIGR01569">
    <property type="entry name" value="A_tha_TIGR01569"/>
    <property type="match status" value="1"/>
</dbReference>
<dbReference type="PANTHER" id="PTHR33573:SF46">
    <property type="entry name" value="CASP-LIKE PROTEIN 2A1"/>
    <property type="match status" value="1"/>
</dbReference>
<dbReference type="PANTHER" id="PTHR33573">
    <property type="entry name" value="CASP-LIKE PROTEIN 4A4"/>
    <property type="match status" value="1"/>
</dbReference>
<dbReference type="Pfam" id="PF04535">
    <property type="entry name" value="CASP_dom"/>
    <property type="match status" value="1"/>
</dbReference>
<sequence>MEKSNDHDKASHGGSGGGATEKWEETSPGIRTAETMLRLAPVGLCVAALVVMLKDSETNEFGSISYSNLTAFRYLVHANGICAGYSLLSAAIAAMPRSSSTMPRVWTFFCLDQLLTYLVLAAGAVSAEVLYLAYNGDSAITWSDACSSYGGFCHRATASVIITFFVVCFYILLSLISSYKLFTRFDPPSIVDSDKTLEVAVFGS</sequence>
<accession>D7KFC7</accession>
<reference key="1">
    <citation type="journal article" date="2011" name="Nat. Genet.">
        <title>The Arabidopsis lyrata genome sequence and the basis of rapid genome size change.</title>
        <authorList>
            <person name="Hu T.T."/>
            <person name="Pattyn P."/>
            <person name="Bakker E.G."/>
            <person name="Cao J."/>
            <person name="Cheng J.-F."/>
            <person name="Clark R.M."/>
            <person name="Fahlgren N."/>
            <person name="Fawcett J.A."/>
            <person name="Grimwood J."/>
            <person name="Gundlach H."/>
            <person name="Haberer G."/>
            <person name="Hollister J.D."/>
            <person name="Ossowski S."/>
            <person name="Ottilar R.P."/>
            <person name="Salamov A.A."/>
            <person name="Schneeberger K."/>
            <person name="Spannagl M."/>
            <person name="Wang X."/>
            <person name="Yang L."/>
            <person name="Nasrallah M.E."/>
            <person name="Bergelson J."/>
            <person name="Carrington J.C."/>
            <person name="Gaut B.S."/>
            <person name="Schmutz J."/>
            <person name="Mayer K.F.X."/>
            <person name="Van de Peer Y."/>
            <person name="Grigoriev I.V."/>
            <person name="Nordborg M."/>
            <person name="Weigel D."/>
            <person name="Guo Y.-L."/>
        </authorList>
    </citation>
    <scope>NUCLEOTIDE SEQUENCE [LARGE SCALE GENOMIC DNA]</scope>
    <source>
        <strain>cv. MN47</strain>
    </source>
</reference>
<reference key="2">
    <citation type="journal article" date="2014" name="Plant Physiol.">
        <title>Functional and evolutionary analysis of the CASPARIAN STRIP MEMBRANE DOMAIN PROTEIN family.</title>
        <authorList>
            <person name="Roppolo D."/>
            <person name="Boeckmann B."/>
            <person name="Pfister A."/>
            <person name="Boutet E."/>
            <person name="Rubio M.C."/>
            <person name="Denervaud-Tendon V."/>
            <person name="Vermeer J.E."/>
            <person name="Gheyselinck J."/>
            <person name="Xenarios I."/>
            <person name="Geldner N."/>
        </authorList>
    </citation>
    <scope>GENE FAMILY</scope>
    <scope>NOMENCLATURE</scope>
</reference>
<proteinExistence type="inferred from homology"/>
<feature type="chain" id="PRO_0000412010" description="CASP-like protein 2A1">
    <location>
        <begin position="1"/>
        <end position="204"/>
    </location>
</feature>
<feature type="topological domain" description="Cytoplasmic" evidence="2">
    <location>
        <begin position="1"/>
        <end position="32"/>
    </location>
</feature>
<feature type="transmembrane region" description="Helical" evidence="2">
    <location>
        <begin position="33"/>
        <end position="53"/>
    </location>
</feature>
<feature type="topological domain" description="Extracellular" evidence="2">
    <location>
        <begin position="54"/>
        <end position="74"/>
    </location>
</feature>
<feature type="transmembrane region" description="Helical" evidence="2">
    <location>
        <begin position="75"/>
        <end position="95"/>
    </location>
</feature>
<feature type="topological domain" description="Cytoplasmic" evidence="2">
    <location>
        <begin position="96"/>
        <end position="113"/>
    </location>
</feature>
<feature type="transmembrane region" description="Helical" evidence="2">
    <location>
        <begin position="114"/>
        <end position="134"/>
    </location>
</feature>
<feature type="topological domain" description="Extracellular" evidence="2">
    <location>
        <begin position="135"/>
        <end position="155"/>
    </location>
</feature>
<feature type="transmembrane region" description="Helical" evidence="2">
    <location>
        <begin position="156"/>
        <end position="176"/>
    </location>
</feature>
<feature type="topological domain" description="Cytoplasmic" evidence="2">
    <location>
        <begin position="177"/>
        <end position="204"/>
    </location>
</feature>
<feature type="region of interest" description="Disordered" evidence="3">
    <location>
        <begin position="1"/>
        <end position="25"/>
    </location>
</feature>
<feature type="compositionally biased region" description="Basic and acidic residues" evidence="3">
    <location>
        <begin position="1"/>
        <end position="11"/>
    </location>
</feature>
<feature type="glycosylation site" description="N-linked (GlcNAc...) asparagine" evidence="2">
    <location>
        <position position="68"/>
    </location>
</feature>
<evidence type="ECO:0000250" key="1"/>
<evidence type="ECO:0000255" key="2"/>
<evidence type="ECO:0000256" key="3">
    <source>
        <dbReference type="SAM" id="MobiDB-lite"/>
    </source>
</evidence>
<evidence type="ECO:0000305" key="4"/>
<comment type="subunit">
    <text evidence="1">Homodimer and heterodimers.</text>
</comment>
<comment type="subcellular location">
    <subcellularLocation>
        <location evidence="1">Cell membrane</location>
        <topology evidence="1">Multi-pass membrane protein</topology>
    </subcellularLocation>
</comment>
<comment type="similarity">
    <text evidence="4">Belongs to the Casparian strip membrane proteins (CASP) family.</text>
</comment>
<organism>
    <name type="scientific">Arabidopsis lyrata subsp. lyrata</name>
    <name type="common">Lyre-leaved rock-cress</name>
    <dbReference type="NCBI Taxonomy" id="81972"/>
    <lineage>
        <taxon>Eukaryota</taxon>
        <taxon>Viridiplantae</taxon>
        <taxon>Streptophyta</taxon>
        <taxon>Embryophyta</taxon>
        <taxon>Tracheophyta</taxon>
        <taxon>Spermatophyta</taxon>
        <taxon>Magnoliopsida</taxon>
        <taxon>eudicotyledons</taxon>
        <taxon>Gunneridae</taxon>
        <taxon>Pentapetalae</taxon>
        <taxon>rosids</taxon>
        <taxon>malvids</taxon>
        <taxon>Brassicales</taxon>
        <taxon>Brassicaceae</taxon>
        <taxon>Camelineae</taxon>
        <taxon>Arabidopsis</taxon>
    </lineage>
</organism>
<name>CSPLB_ARALL</name>
<protein>
    <recommendedName>
        <fullName>CASP-like protein 2A1</fullName>
        <shortName>AlCASPL2A1</shortName>
    </recommendedName>
</protein>